<dbReference type="EC" id="2.5.1.6" evidence="1"/>
<dbReference type="EMBL" id="CP000381">
    <property type="protein sequence ID" value="ABX72633.1"/>
    <property type="molecule type" value="Genomic_DNA"/>
</dbReference>
<dbReference type="RefSeq" id="WP_002232983.1">
    <property type="nucleotide sequence ID" value="NC_010120.1"/>
</dbReference>
<dbReference type="SMR" id="A9M1V8"/>
<dbReference type="KEGG" id="nmn:NMCC_0428"/>
<dbReference type="HOGENOM" id="CLU_041802_1_1_4"/>
<dbReference type="UniPathway" id="UPA00315">
    <property type="reaction ID" value="UER00080"/>
</dbReference>
<dbReference type="Proteomes" id="UP000001177">
    <property type="component" value="Chromosome"/>
</dbReference>
<dbReference type="GO" id="GO:0005737">
    <property type="term" value="C:cytoplasm"/>
    <property type="evidence" value="ECO:0007669"/>
    <property type="project" value="UniProtKB-SubCell"/>
</dbReference>
<dbReference type="GO" id="GO:0005524">
    <property type="term" value="F:ATP binding"/>
    <property type="evidence" value="ECO:0007669"/>
    <property type="project" value="UniProtKB-UniRule"/>
</dbReference>
<dbReference type="GO" id="GO:0000287">
    <property type="term" value="F:magnesium ion binding"/>
    <property type="evidence" value="ECO:0007669"/>
    <property type="project" value="UniProtKB-UniRule"/>
</dbReference>
<dbReference type="GO" id="GO:0004478">
    <property type="term" value="F:methionine adenosyltransferase activity"/>
    <property type="evidence" value="ECO:0007669"/>
    <property type="project" value="UniProtKB-UniRule"/>
</dbReference>
<dbReference type="GO" id="GO:0006730">
    <property type="term" value="P:one-carbon metabolic process"/>
    <property type="evidence" value="ECO:0007669"/>
    <property type="project" value="UniProtKB-KW"/>
</dbReference>
<dbReference type="GO" id="GO:0006556">
    <property type="term" value="P:S-adenosylmethionine biosynthetic process"/>
    <property type="evidence" value="ECO:0007669"/>
    <property type="project" value="UniProtKB-UniRule"/>
</dbReference>
<dbReference type="CDD" id="cd18079">
    <property type="entry name" value="S-AdoMet_synt"/>
    <property type="match status" value="1"/>
</dbReference>
<dbReference type="FunFam" id="3.30.300.10:FF:000003">
    <property type="entry name" value="S-adenosylmethionine synthase"/>
    <property type="match status" value="1"/>
</dbReference>
<dbReference type="FunFam" id="3.30.300.10:FF:000004">
    <property type="entry name" value="S-adenosylmethionine synthase"/>
    <property type="match status" value="1"/>
</dbReference>
<dbReference type="Gene3D" id="3.30.300.10">
    <property type="match status" value="3"/>
</dbReference>
<dbReference type="HAMAP" id="MF_00086">
    <property type="entry name" value="S_AdoMet_synth1"/>
    <property type="match status" value="1"/>
</dbReference>
<dbReference type="InterPro" id="IPR022631">
    <property type="entry name" value="ADOMET_SYNTHASE_CS"/>
</dbReference>
<dbReference type="InterPro" id="IPR022630">
    <property type="entry name" value="S-AdoMet_synt_C"/>
</dbReference>
<dbReference type="InterPro" id="IPR022629">
    <property type="entry name" value="S-AdoMet_synt_central"/>
</dbReference>
<dbReference type="InterPro" id="IPR022628">
    <property type="entry name" value="S-AdoMet_synt_N"/>
</dbReference>
<dbReference type="InterPro" id="IPR002133">
    <property type="entry name" value="S-AdoMet_synthetase"/>
</dbReference>
<dbReference type="InterPro" id="IPR022636">
    <property type="entry name" value="S-AdoMet_synthetase_sfam"/>
</dbReference>
<dbReference type="NCBIfam" id="TIGR01034">
    <property type="entry name" value="metK"/>
    <property type="match status" value="1"/>
</dbReference>
<dbReference type="PANTHER" id="PTHR11964">
    <property type="entry name" value="S-ADENOSYLMETHIONINE SYNTHETASE"/>
    <property type="match status" value="1"/>
</dbReference>
<dbReference type="Pfam" id="PF02773">
    <property type="entry name" value="S-AdoMet_synt_C"/>
    <property type="match status" value="1"/>
</dbReference>
<dbReference type="Pfam" id="PF02772">
    <property type="entry name" value="S-AdoMet_synt_M"/>
    <property type="match status" value="1"/>
</dbReference>
<dbReference type="Pfam" id="PF00438">
    <property type="entry name" value="S-AdoMet_synt_N"/>
    <property type="match status" value="1"/>
</dbReference>
<dbReference type="PIRSF" id="PIRSF000497">
    <property type="entry name" value="MAT"/>
    <property type="match status" value="1"/>
</dbReference>
<dbReference type="SUPFAM" id="SSF55973">
    <property type="entry name" value="S-adenosylmethionine synthetase"/>
    <property type="match status" value="3"/>
</dbReference>
<dbReference type="PROSITE" id="PS00376">
    <property type="entry name" value="ADOMET_SYNTHASE_1"/>
    <property type="match status" value="1"/>
</dbReference>
<dbReference type="PROSITE" id="PS00377">
    <property type="entry name" value="ADOMET_SYNTHASE_2"/>
    <property type="match status" value="1"/>
</dbReference>
<feature type="chain" id="PRO_1000075383" description="S-adenosylmethionine synthase">
    <location>
        <begin position="1"/>
        <end position="389"/>
    </location>
</feature>
<feature type="region of interest" description="Flexible loop" evidence="1">
    <location>
        <begin position="99"/>
        <end position="109"/>
    </location>
</feature>
<feature type="binding site" description="in other chain" evidence="1">
    <location>
        <position position="15"/>
    </location>
    <ligand>
        <name>ATP</name>
        <dbReference type="ChEBI" id="CHEBI:30616"/>
        <note>ligand shared between two neighboring subunits</note>
    </ligand>
</feature>
<feature type="binding site" evidence="1">
    <location>
        <position position="17"/>
    </location>
    <ligand>
        <name>Mg(2+)</name>
        <dbReference type="ChEBI" id="CHEBI:18420"/>
    </ligand>
</feature>
<feature type="binding site" evidence="1">
    <location>
        <position position="43"/>
    </location>
    <ligand>
        <name>K(+)</name>
        <dbReference type="ChEBI" id="CHEBI:29103"/>
    </ligand>
</feature>
<feature type="binding site" description="in other chain" evidence="1">
    <location>
        <position position="56"/>
    </location>
    <ligand>
        <name>L-methionine</name>
        <dbReference type="ChEBI" id="CHEBI:57844"/>
        <note>ligand shared between two neighboring subunits</note>
    </ligand>
</feature>
<feature type="binding site" description="in other chain" evidence="1">
    <location>
        <position position="99"/>
    </location>
    <ligand>
        <name>L-methionine</name>
        <dbReference type="ChEBI" id="CHEBI:57844"/>
        <note>ligand shared between two neighboring subunits</note>
    </ligand>
</feature>
<feature type="binding site" description="in other chain" evidence="1">
    <location>
        <begin position="166"/>
        <end position="168"/>
    </location>
    <ligand>
        <name>ATP</name>
        <dbReference type="ChEBI" id="CHEBI:30616"/>
        <note>ligand shared between two neighboring subunits</note>
    </ligand>
</feature>
<feature type="binding site" description="in other chain" evidence="1">
    <location>
        <begin position="234"/>
        <end position="235"/>
    </location>
    <ligand>
        <name>ATP</name>
        <dbReference type="ChEBI" id="CHEBI:30616"/>
        <note>ligand shared between two neighboring subunits</note>
    </ligand>
</feature>
<feature type="binding site" evidence="1">
    <location>
        <position position="243"/>
    </location>
    <ligand>
        <name>ATP</name>
        <dbReference type="ChEBI" id="CHEBI:30616"/>
        <note>ligand shared between two neighboring subunits</note>
    </ligand>
</feature>
<feature type="binding site" evidence="1">
    <location>
        <position position="243"/>
    </location>
    <ligand>
        <name>L-methionine</name>
        <dbReference type="ChEBI" id="CHEBI:57844"/>
        <note>ligand shared between two neighboring subunits</note>
    </ligand>
</feature>
<feature type="binding site" description="in other chain" evidence="1">
    <location>
        <begin position="249"/>
        <end position="250"/>
    </location>
    <ligand>
        <name>ATP</name>
        <dbReference type="ChEBI" id="CHEBI:30616"/>
        <note>ligand shared between two neighboring subunits</note>
    </ligand>
</feature>
<feature type="binding site" evidence="1">
    <location>
        <position position="266"/>
    </location>
    <ligand>
        <name>ATP</name>
        <dbReference type="ChEBI" id="CHEBI:30616"/>
        <note>ligand shared between two neighboring subunits</note>
    </ligand>
</feature>
<feature type="binding site" evidence="1">
    <location>
        <position position="270"/>
    </location>
    <ligand>
        <name>ATP</name>
        <dbReference type="ChEBI" id="CHEBI:30616"/>
        <note>ligand shared between two neighboring subunits</note>
    </ligand>
</feature>
<feature type="binding site" description="in other chain" evidence="1">
    <location>
        <position position="274"/>
    </location>
    <ligand>
        <name>L-methionine</name>
        <dbReference type="ChEBI" id="CHEBI:57844"/>
        <note>ligand shared between two neighboring subunits</note>
    </ligand>
</feature>
<keyword id="KW-0067">ATP-binding</keyword>
<keyword id="KW-0963">Cytoplasm</keyword>
<keyword id="KW-0460">Magnesium</keyword>
<keyword id="KW-0479">Metal-binding</keyword>
<keyword id="KW-0547">Nucleotide-binding</keyword>
<keyword id="KW-0554">One-carbon metabolism</keyword>
<keyword id="KW-0630">Potassium</keyword>
<keyword id="KW-0808">Transferase</keyword>
<sequence length="389" mass="42148">MSEYLFTSESVSEGHPDKVADQVSDAILDAILAQDPKARVAAETLVNTGLCVLAGEITTTAQVDYIKVARETIKRIGYNSSELGFDANGCAVGVYYDQQSPDIAQGVNEGEGIDLNQGAGDQGLMFGYACDETPTLMPFAIYYSHRLMQRQSELRKDGRLPWLRPDAKAQLTVVYDSETGKVKRIDTVVLSTQHDPEIGYEELKNAVIEQIIKPVLPSELLTDETKYLINPTGRFVIGGPQGDCGLTGRKIIVDTYGGAAPHGGGAFSGKDPSKVDRSAAYACRYVAKNIVAAGLATQCQIQVSYAIGVAEPTSISIDTFGTGKISEEKLITLVREHFDLRPKGIVQMLDLLRPIYSKSAAYGHFGREEPEFTWERTDKAAALRAAAGL</sequence>
<evidence type="ECO:0000255" key="1">
    <source>
        <dbReference type="HAMAP-Rule" id="MF_00086"/>
    </source>
</evidence>
<accession>A9M1V8</accession>
<protein>
    <recommendedName>
        <fullName evidence="1">S-adenosylmethionine synthase</fullName>
        <shortName evidence="1">AdoMet synthase</shortName>
        <ecNumber evidence="1">2.5.1.6</ecNumber>
    </recommendedName>
    <alternativeName>
        <fullName evidence="1">MAT</fullName>
    </alternativeName>
    <alternativeName>
        <fullName evidence="1">Methionine adenosyltransferase</fullName>
    </alternativeName>
</protein>
<reference key="1">
    <citation type="journal article" date="2008" name="Genomics">
        <title>Characterization of ST-4821 complex, a unique Neisseria meningitidis clone.</title>
        <authorList>
            <person name="Peng J."/>
            <person name="Yang L."/>
            <person name="Yang F."/>
            <person name="Yang J."/>
            <person name="Yan Y."/>
            <person name="Nie H."/>
            <person name="Zhang X."/>
            <person name="Xiong Z."/>
            <person name="Jiang Y."/>
            <person name="Cheng F."/>
            <person name="Xu X."/>
            <person name="Chen S."/>
            <person name="Sun L."/>
            <person name="Li W."/>
            <person name="Shen Y."/>
            <person name="Shao Z."/>
            <person name="Liang X."/>
            <person name="Xu J."/>
            <person name="Jin Q."/>
        </authorList>
    </citation>
    <scope>NUCLEOTIDE SEQUENCE [LARGE SCALE GENOMIC DNA]</scope>
    <source>
        <strain>053442</strain>
    </source>
</reference>
<proteinExistence type="inferred from homology"/>
<gene>
    <name evidence="1" type="primary">metK</name>
    <name type="ordered locus">NMCC_0428</name>
</gene>
<comment type="function">
    <text evidence="1">Catalyzes the formation of S-adenosylmethionine (AdoMet) from methionine and ATP. The overall synthetic reaction is composed of two sequential steps, AdoMet formation and the subsequent tripolyphosphate hydrolysis which occurs prior to release of AdoMet from the enzyme.</text>
</comment>
<comment type="catalytic activity">
    <reaction evidence="1">
        <text>L-methionine + ATP + H2O = S-adenosyl-L-methionine + phosphate + diphosphate</text>
        <dbReference type="Rhea" id="RHEA:21080"/>
        <dbReference type="ChEBI" id="CHEBI:15377"/>
        <dbReference type="ChEBI" id="CHEBI:30616"/>
        <dbReference type="ChEBI" id="CHEBI:33019"/>
        <dbReference type="ChEBI" id="CHEBI:43474"/>
        <dbReference type="ChEBI" id="CHEBI:57844"/>
        <dbReference type="ChEBI" id="CHEBI:59789"/>
        <dbReference type="EC" id="2.5.1.6"/>
    </reaction>
</comment>
<comment type="cofactor">
    <cofactor evidence="1">
        <name>Mg(2+)</name>
        <dbReference type="ChEBI" id="CHEBI:18420"/>
    </cofactor>
    <text evidence="1">Binds 2 divalent ions per subunit.</text>
</comment>
<comment type="cofactor">
    <cofactor evidence="1">
        <name>K(+)</name>
        <dbReference type="ChEBI" id="CHEBI:29103"/>
    </cofactor>
    <text evidence="1">Binds 1 potassium ion per subunit.</text>
</comment>
<comment type="pathway">
    <text evidence="1">Amino-acid biosynthesis; S-adenosyl-L-methionine biosynthesis; S-adenosyl-L-methionine from L-methionine: step 1/1.</text>
</comment>
<comment type="subunit">
    <text evidence="1">Homotetramer; dimer of dimers.</text>
</comment>
<comment type="subcellular location">
    <subcellularLocation>
        <location evidence="1">Cytoplasm</location>
    </subcellularLocation>
</comment>
<comment type="similarity">
    <text evidence="1">Belongs to the AdoMet synthase family.</text>
</comment>
<name>METK_NEIM0</name>
<organism>
    <name type="scientific">Neisseria meningitidis serogroup C (strain 053442)</name>
    <dbReference type="NCBI Taxonomy" id="374833"/>
    <lineage>
        <taxon>Bacteria</taxon>
        <taxon>Pseudomonadati</taxon>
        <taxon>Pseudomonadota</taxon>
        <taxon>Betaproteobacteria</taxon>
        <taxon>Neisseriales</taxon>
        <taxon>Neisseriaceae</taxon>
        <taxon>Neisseria</taxon>
    </lineage>
</organism>